<dbReference type="EC" id="7.4.2.11" evidence="1"/>
<dbReference type="EMBL" id="CP000033">
    <property type="protein sequence ID" value="AAV42762.1"/>
    <property type="molecule type" value="Genomic_DNA"/>
</dbReference>
<dbReference type="RefSeq" id="WP_003546989.1">
    <property type="nucleotide sequence ID" value="NC_006814.3"/>
</dbReference>
<dbReference type="RefSeq" id="YP_193793.1">
    <property type="nucleotide sequence ID" value="NC_006814.3"/>
</dbReference>
<dbReference type="SMR" id="Q5FKL2"/>
<dbReference type="STRING" id="272621.LBA0905"/>
<dbReference type="KEGG" id="lac:LBA0905"/>
<dbReference type="PATRIC" id="fig|272621.13.peg.863"/>
<dbReference type="eggNOG" id="COG1135">
    <property type="taxonomic scope" value="Bacteria"/>
</dbReference>
<dbReference type="HOGENOM" id="CLU_000604_1_3_9"/>
<dbReference type="OrthoDB" id="9802264at2"/>
<dbReference type="BioCyc" id="LACI272621:G1G49-912-MONOMER"/>
<dbReference type="Proteomes" id="UP000006381">
    <property type="component" value="Chromosome"/>
</dbReference>
<dbReference type="GO" id="GO:0005886">
    <property type="term" value="C:plasma membrane"/>
    <property type="evidence" value="ECO:0007669"/>
    <property type="project" value="UniProtKB-SubCell"/>
</dbReference>
<dbReference type="GO" id="GO:0033232">
    <property type="term" value="F:ABC-type D-methionine transporter activity"/>
    <property type="evidence" value="ECO:0007669"/>
    <property type="project" value="UniProtKB-EC"/>
</dbReference>
<dbReference type="GO" id="GO:0005524">
    <property type="term" value="F:ATP binding"/>
    <property type="evidence" value="ECO:0007669"/>
    <property type="project" value="UniProtKB-KW"/>
</dbReference>
<dbReference type="GO" id="GO:0016887">
    <property type="term" value="F:ATP hydrolysis activity"/>
    <property type="evidence" value="ECO:0007669"/>
    <property type="project" value="InterPro"/>
</dbReference>
<dbReference type="CDD" id="cd03258">
    <property type="entry name" value="ABC_MetN_methionine_transporter"/>
    <property type="match status" value="1"/>
</dbReference>
<dbReference type="Gene3D" id="3.30.70.260">
    <property type="match status" value="1"/>
</dbReference>
<dbReference type="Gene3D" id="3.40.50.300">
    <property type="entry name" value="P-loop containing nucleotide triphosphate hydrolases"/>
    <property type="match status" value="1"/>
</dbReference>
<dbReference type="InterPro" id="IPR003593">
    <property type="entry name" value="AAA+_ATPase"/>
</dbReference>
<dbReference type="InterPro" id="IPR003439">
    <property type="entry name" value="ABC_transporter-like_ATP-bd"/>
</dbReference>
<dbReference type="InterPro" id="IPR017871">
    <property type="entry name" value="ABC_transporter-like_CS"/>
</dbReference>
<dbReference type="InterPro" id="IPR045865">
    <property type="entry name" value="ACT-like_dom_sf"/>
</dbReference>
<dbReference type="InterPro" id="IPR041701">
    <property type="entry name" value="MetN_ABC"/>
</dbReference>
<dbReference type="InterPro" id="IPR050086">
    <property type="entry name" value="MetN_ABC_transporter-like"/>
</dbReference>
<dbReference type="InterPro" id="IPR018449">
    <property type="entry name" value="NIL_domain"/>
</dbReference>
<dbReference type="InterPro" id="IPR027417">
    <property type="entry name" value="P-loop_NTPase"/>
</dbReference>
<dbReference type="PANTHER" id="PTHR43166">
    <property type="entry name" value="AMINO ACID IMPORT ATP-BINDING PROTEIN"/>
    <property type="match status" value="1"/>
</dbReference>
<dbReference type="PANTHER" id="PTHR43166:SF30">
    <property type="entry name" value="METHIONINE IMPORT ATP-BINDING PROTEIN METN"/>
    <property type="match status" value="1"/>
</dbReference>
<dbReference type="Pfam" id="PF00005">
    <property type="entry name" value="ABC_tran"/>
    <property type="match status" value="1"/>
</dbReference>
<dbReference type="Pfam" id="PF09383">
    <property type="entry name" value="NIL"/>
    <property type="match status" value="1"/>
</dbReference>
<dbReference type="SMART" id="SM00382">
    <property type="entry name" value="AAA"/>
    <property type="match status" value="1"/>
</dbReference>
<dbReference type="SMART" id="SM00930">
    <property type="entry name" value="NIL"/>
    <property type="match status" value="1"/>
</dbReference>
<dbReference type="SUPFAM" id="SSF55021">
    <property type="entry name" value="ACT-like"/>
    <property type="match status" value="1"/>
</dbReference>
<dbReference type="SUPFAM" id="SSF52540">
    <property type="entry name" value="P-loop containing nucleoside triphosphate hydrolases"/>
    <property type="match status" value="1"/>
</dbReference>
<dbReference type="PROSITE" id="PS00211">
    <property type="entry name" value="ABC_TRANSPORTER_1"/>
    <property type="match status" value="1"/>
</dbReference>
<dbReference type="PROSITE" id="PS50893">
    <property type="entry name" value="ABC_TRANSPORTER_2"/>
    <property type="match status" value="1"/>
</dbReference>
<dbReference type="PROSITE" id="PS51264">
    <property type="entry name" value="METN"/>
    <property type="match status" value="1"/>
</dbReference>
<accession>Q5FKL2</accession>
<protein>
    <recommendedName>
        <fullName evidence="1">Methionine import ATP-binding protein MetN</fullName>
        <ecNumber evidence="1">7.4.2.11</ecNumber>
    </recommendedName>
</protein>
<comment type="function">
    <text evidence="1">Part of the ABC transporter complex MetNIQ involved in methionine import. Responsible for energy coupling to the transport system.</text>
</comment>
<comment type="catalytic activity">
    <reaction evidence="1">
        <text>L-methionine(out) + ATP + H2O = L-methionine(in) + ADP + phosphate + H(+)</text>
        <dbReference type="Rhea" id="RHEA:29779"/>
        <dbReference type="ChEBI" id="CHEBI:15377"/>
        <dbReference type="ChEBI" id="CHEBI:15378"/>
        <dbReference type="ChEBI" id="CHEBI:30616"/>
        <dbReference type="ChEBI" id="CHEBI:43474"/>
        <dbReference type="ChEBI" id="CHEBI:57844"/>
        <dbReference type="ChEBI" id="CHEBI:456216"/>
        <dbReference type="EC" id="7.4.2.11"/>
    </reaction>
</comment>
<comment type="catalytic activity">
    <reaction evidence="1">
        <text>D-methionine(out) + ATP + H2O = D-methionine(in) + ADP + phosphate + H(+)</text>
        <dbReference type="Rhea" id="RHEA:29767"/>
        <dbReference type="ChEBI" id="CHEBI:15377"/>
        <dbReference type="ChEBI" id="CHEBI:15378"/>
        <dbReference type="ChEBI" id="CHEBI:30616"/>
        <dbReference type="ChEBI" id="CHEBI:43474"/>
        <dbReference type="ChEBI" id="CHEBI:57932"/>
        <dbReference type="ChEBI" id="CHEBI:456216"/>
        <dbReference type="EC" id="7.4.2.11"/>
    </reaction>
</comment>
<comment type="subunit">
    <text evidence="1">The complex is composed of two ATP-binding proteins (MetN), two transmembrane proteins (MetI) and a solute-binding protein (MetQ).</text>
</comment>
<comment type="subcellular location">
    <subcellularLocation>
        <location evidence="1">Cell membrane</location>
        <topology evidence="1">Peripheral membrane protein</topology>
    </subcellularLocation>
</comment>
<comment type="similarity">
    <text evidence="1">Belongs to the ABC transporter superfamily. Methionine importer (TC 3.A.1.24) family.</text>
</comment>
<gene>
    <name evidence="1" type="primary">metN</name>
    <name type="ordered locus">LBA0905</name>
</gene>
<organism>
    <name type="scientific">Lactobacillus acidophilus (strain ATCC 700396 / NCK56 / N2 / NCFM)</name>
    <dbReference type="NCBI Taxonomy" id="272621"/>
    <lineage>
        <taxon>Bacteria</taxon>
        <taxon>Bacillati</taxon>
        <taxon>Bacillota</taxon>
        <taxon>Bacilli</taxon>
        <taxon>Lactobacillales</taxon>
        <taxon>Lactobacillaceae</taxon>
        <taxon>Lactobacillus</taxon>
    </lineage>
</organism>
<keyword id="KW-0029">Amino-acid transport</keyword>
<keyword id="KW-0067">ATP-binding</keyword>
<keyword id="KW-1003">Cell membrane</keyword>
<keyword id="KW-0472">Membrane</keyword>
<keyword id="KW-0547">Nucleotide-binding</keyword>
<keyword id="KW-1185">Reference proteome</keyword>
<keyword id="KW-1278">Translocase</keyword>
<keyword id="KW-0813">Transport</keyword>
<evidence type="ECO:0000255" key="1">
    <source>
        <dbReference type="HAMAP-Rule" id="MF_01719"/>
    </source>
</evidence>
<proteinExistence type="inferred from homology"/>
<feature type="chain" id="PRO_0000270313" description="Methionine import ATP-binding protein MetN">
    <location>
        <begin position="1"/>
        <end position="353"/>
    </location>
</feature>
<feature type="domain" description="ABC transporter" evidence="1">
    <location>
        <begin position="6"/>
        <end position="249"/>
    </location>
</feature>
<feature type="binding site" evidence="1">
    <location>
        <begin position="41"/>
        <end position="48"/>
    </location>
    <ligand>
        <name>ATP</name>
        <dbReference type="ChEBI" id="CHEBI:30616"/>
    </ligand>
</feature>
<reference key="1">
    <citation type="journal article" date="2005" name="Proc. Natl. Acad. Sci. U.S.A.">
        <title>Complete genome sequence of the probiotic lactic acid bacterium Lactobacillus acidophilus NCFM.</title>
        <authorList>
            <person name="Altermann E."/>
            <person name="Russell W.M."/>
            <person name="Azcarate-Peril M.A."/>
            <person name="Barrangou R."/>
            <person name="Buck B.L."/>
            <person name="McAuliffe O."/>
            <person name="Souther N."/>
            <person name="Dobson A."/>
            <person name="Duong T."/>
            <person name="Callanan M."/>
            <person name="Lick S."/>
            <person name="Hamrick A."/>
            <person name="Cano R."/>
            <person name="Klaenhammer T.R."/>
        </authorList>
    </citation>
    <scope>NUCLEOTIDE SEQUENCE [LARGE SCALE GENOMIC DNA]</scope>
    <source>
        <strain>ATCC 700396 / NCK56 / N2 / NCFM</strain>
    </source>
</reference>
<name>METN_LACAC</name>
<sequence>MSIIELKNVDVDFPQKKGKLVKAVNSVSLSIEKGDIYGIVGFSGAGKSTLVRTINLLQKPSAGDIEVDGTQFVKDGKQVISNKELQLKRRNIGMIFQGFNLLNETTVLENVAFALKHEKLSDDELEKKSLELLELVDLKEKANFYPSELSGGQKQRVAIARALANNPDILISDEATSALDPQNTQQILDLLKRLNKQFNLTVILITHEMDAVKKIATKVAVMEHGQVIEKGSLRQVFLHPKQELTKKFVGGSLEAISTLNSLHLDKLSKNESIYQLVYSVNNVAKSIIIELYKEIGVEVSMLYGNVELLNDEPIGTLVVLIKGDQEKQKQAKEFLQKQDVTLTRLDEKGNIYD</sequence>